<evidence type="ECO:0000255" key="1">
    <source>
        <dbReference type="HAMAP-Rule" id="MF_00274"/>
    </source>
</evidence>
<name>Y1227_AKKM8</name>
<accession>B2URG7</accession>
<organism>
    <name type="scientific">Akkermansia muciniphila (strain ATCC BAA-835 / DSM 22959 / JCM 33894 / BCRC 81048 / CCUG 64013 / CIP 107961 / Muc)</name>
    <dbReference type="NCBI Taxonomy" id="349741"/>
    <lineage>
        <taxon>Bacteria</taxon>
        <taxon>Pseudomonadati</taxon>
        <taxon>Verrucomicrobiota</taxon>
        <taxon>Verrucomicrobiia</taxon>
        <taxon>Verrucomicrobiales</taxon>
        <taxon>Akkermansiaceae</taxon>
        <taxon>Akkermansia</taxon>
    </lineage>
</organism>
<gene>
    <name type="ordered locus">Amuc_1227</name>
</gene>
<feature type="chain" id="PRO_1000114578" description="Nucleoid-associated protein Amuc_1227">
    <location>
        <begin position="1"/>
        <end position="104"/>
    </location>
</feature>
<keyword id="KW-0963">Cytoplasm</keyword>
<keyword id="KW-0238">DNA-binding</keyword>
<keyword id="KW-1185">Reference proteome</keyword>
<sequence>MNIMKMMKQVQQMQAGLAAAQEKLASQTVTTEGAGGKLKVTATCDGNLTELVIDPSIIDPSDSEFLQELLLQTINAAIAKGKETAAAEMKKLTGGLDLPPGMGF</sequence>
<protein>
    <recommendedName>
        <fullName evidence="1">Nucleoid-associated protein Amuc_1227</fullName>
    </recommendedName>
</protein>
<dbReference type="EMBL" id="CP001071">
    <property type="protein sequence ID" value="ACD05052.1"/>
    <property type="molecule type" value="Genomic_DNA"/>
</dbReference>
<dbReference type="SMR" id="B2URG7"/>
<dbReference type="STRING" id="349741.Amuc_1227"/>
<dbReference type="PaxDb" id="349741-Amuc_1227"/>
<dbReference type="KEGG" id="amu:Amuc_1227"/>
<dbReference type="eggNOG" id="COG0718">
    <property type="taxonomic scope" value="Bacteria"/>
</dbReference>
<dbReference type="HOGENOM" id="CLU_140930_0_1_0"/>
<dbReference type="OrthoDB" id="9795263at2"/>
<dbReference type="BioCyc" id="AMUC349741:G1GBX-1310-MONOMER"/>
<dbReference type="Proteomes" id="UP000001031">
    <property type="component" value="Chromosome"/>
</dbReference>
<dbReference type="GO" id="GO:0043590">
    <property type="term" value="C:bacterial nucleoid"/>
    <property type="evidence" value="ECO:0007669"/>
    <property type="project" value="UniProtKB-UniRule"/>
</dbReference>
<dbReference type="GO" id="GO:0005829">
    <property type="term" value="C:cytosol"/>
    <property type="evidence" value="ECO:0007669"/>
    <property type="project" value="TreeGrafter"/>
</dbReference>
<dbReference type="GO" id="GO:0003677">
    <property type="term" value="F:DNA binding"/>
    <property type="evidence" value="ECO:0007669"/>
    <property type="project" value="UniProtKB-UniRule"/>
</dbReference>
<dbReference type="Gene3D" id="3.30.1310.10">
    <property type="entry name" value="Nucleoid-associated protein YbaB-like domain"/>
    <property type="match status" value="1"/>
</dbReference>
<dbReference type="HAMAP" id="MF_00274">
    <property type="entry name" value="DNA_YbaB_EbfC"/>
    <property type="match status" value="1"/>
</dbReference>
<dbReference type="InterPro" id="IPR036894">
    <property type="entry name" value="YbaB-like_sf"/>
</dbReference>
<dbReference type="InterPro" id="IPR004401">
    <property type="entry name" value="YbaB/EbfC"/>
</dbReference>
<dbReference type="NCBIfam" id="TIGR00103">
    <property type="entry name" value="DNA_YbaB_EbfC"/>
    <property type="match status" value="1"/>
</dbReference>
<dbReference type="PANTHER" id="PTHR33449">
    <property type="entry name" value="NUCLEOID-ASSOCIATED PROTEIN YBAB"/>
    <property type="match status" value="1"/>
</dbReference>
<dbReference type="PANTHER" id="PTHR33449:SF1">
    <property type="entry name" value="NUCLEOID-ASSOCIATED PROTEIN YBAB"/>
    <property type="match status" value="1"/>
</dbReference>
<dbReference type="Pfam" id="PF02575">
    <property type="entry name" value="YbaB_DNA_bd"/>
    <property type="match status" value="1"/>
</dbReference>
<dbReference type="PIRSF" id="PIRSF004555">
    <property type="entry name" value="UCP004555"/>
    <property type="match status" value="1"/>
</dbReference>
<dbReference type="SUPFAM" id="SSF82607">
    <property type="entry name" value="YbaB-like"/>
    <property type="match status" value="1"/>
</dbReference>
<proteinExistence type="inferred from homology"/>
<comment type="function">
    <text evidence="1">Binds to DNA and alters its conformation. May be involved in regulation of gene expression, nucleoid organization and DNA protection.</text>
</comment>
<comment type="subunit">
    <text evidence="1">Homodimer.</text>
</comment>
<comment type="subcellular location">
    <subcellularLocation>
        <location evidence="1">Cytoplasm</location>
        <location evidence="1">Nucleoid</location>
    </subcellularLocation>
</comment>
<comment type="similarity">
    <text evidence="1">Belongs to the YbaB/EbfC family.</text>
</comment>
<reference key="1">
    <citation type="journal article" date="2011" name="PLoS ONE">
        <title>The genome of Akkermansia muciniphila, a dedicated intestinal mucin degrader, and its use in exploring intestinal metagenomes.</title>
        <authorList>
            <person name="van Passel M.W."/>
            <person name="Kant R."/>
            <person name="Zoetendal E.G."/>
            <person name="Plugge C.M."/>
            <person name="Derrien M."/>
            <person name="Malfatti S.A."/>
            <person name="Chain P.S."/>
            <person name="Woyke T."/>
            <person name="Palva A."/>
            <person name="de Vos W.M."/>
            <person name="Smidt H."/>
        </authorList>
    </citation>
    <scope>NUCLEOTIDE SEQUENCE [LARGE SCALE GENOMIC DNA]</scope>
    <source>
        <strain>ATCC BAA-835 / DSM 22959 / JCM 33894 / BCRC 81048 / CCUG 64013 / CIP 107961 / Muc</strain>
    </source>
</reference>